<name>THII_STAAR</name>
<sequence>MKYDHLLVRYGELTLKGSNRKKFVNQLRNNVNKSLKGLDGFVVKGKRDRMYIELEDHADINEITNRLSKIFGIKSISPVLKVEKSIEAMSAETIKFAQQFEENSTFKIDVKRADKNFPMDTYELQRELGGTVLKQIENVSVNVKRPDHEIRVEVRLDAIYMYEEVVPGSGGLPVGTGGKTLLMLSGGIDSPVAGMEVMRRGVTIEAIHFHSPPFTSDQAKEKVIELTRILAERVGPIKLHIVPFTELQKQVNKVVHPRYTMTSTRRMMMRVADKLVHQIGAYAIVNGENLGQVASQTLHSMYAINNVTSTPVLRPLLTYDKEEIIIKSKEIGTFETSIQPFEDCCTIFTPKNPVTEPNFDKVVQYESVFDFEEMINRAVENIETLEITSDYKTIKEQQTNQLINDFL</sequence>
<organism>
    <name type="scientific">Staphylococcus aureus (strain MRSA252)</name>
    <dbReference type="NCBI Taxonomy" id="282458"/>
    <lineage>
        <taxon>Bacteria</taxon>
        <taxon>Bacillati</taxon>
        <taxon>Bacillota</taxon>
        <taxon>Bacilli</taxon>
        <taxon>Bacillales</taxon>
        <taxon>Staphylococcaceae</taxon>
        <taxon>Staphylococcus</taxon>
    </lineage>
</organism>
<feature type="chain" id="PRO_0000154866" description="Probable tRNA sulfurtransferase">
    <location>
        <begin position="1"/>
        <end position="407"/>
    </location>
</feature>
<feature type="domain" description="THUMP" evidence="1">
    <location>
        <begin position="61"/>
        <end position="165"/>
    </location>
</feature>
<feature type="binding site" evidence="1">
    <location>
        <begin position="183"/>
        <end position="184"/>
    </location>
    <ligand>
        <name>ATP</name>
        <dbReference type="ChEBI" id="CHEBI:30616"/>
    </ligand>
</feature>
<feature type="binding site" evidence="1">
    <location>
        <begin position="208"/>
        <end position="209"/>
    </location>
    <ligand>
        <name>ATP</name>
        <dbReference type="ChEBI" id="CHEBI:30616"/>
    </ligand>
</feature>
<feature type="binding site" evidence="1">
    <location>
        <position position="265"/>
    </location>
    <ligand>
        <name>ATP</name>
        <dbReference type="ChEBI" id="CHEBI:30616"/>
    </ligand>
</feature>
<feature type="binding site" evidence="1">
    <location>
        <position position="287"/>
    </location>
    <ligand>
        <name>ATP</name>
        <dbReference type="ChEBI" id="CHEBI:30616"/>
    </ligand>
</feature>
<feature type="binding site" evidence="1">
    <location>
        <position position="296"/>
    </location>
    <ligand>
        <name>ATP</name>
        <dbReference type="ChEBI" id="CHEBI:30616"/>
    </ligand>
</feature>
<keyword id="KW-0067">ATP-binding</keyword>
<keyword id="KW-0963">Cytoplasm</keyword>
<keyword id="KW-0547">Nucleotide-binding</keyword>
<keyword id="KW-0694">RNA-binding</keyword>
<keyword id="KW-0784">Thiamine biosynthesis</keyword>
<keyword id="KW-0808">Transferase</keyword>
<keyword id="KW-0820">tRNA-binding</keyword>
<comment type="function">
    <text evidence="1">Catalyzes the ATP-dependent transfer of a sulfur to tRNA to produce 4-thiouridine in position 8 of tRNAs, which functions as a near-UV photosensor. Also catalyzes the transfer of sulfur to the sulfur carrier protein ThiS, forming ThiS-thiocarboxylate. This is a step in the synthesis of thiazole, in the thiamine biosynthesis pathway. The sulfur is donated as persulfide by IscS.</text>
</comment>
<comment type="catalytic activity">
    <reaction evidence="1">
        <text>[ThiI sulfur-carrier protein]-S-sulfanyl-L-cysteine + a uridine in tRNA + 2 reduced [2Fe-2S]-[ferredoxin] + ATP + H(+) = [ThiI sulfur-carrier protein]-L-cysteine + a 4-thiouridine in tRNA + 2 oxidized [2Fe-2S]-[ferredoxin] + AMP + diphosphate</text>
        <dbReference type="Rhea" id="RHEA:24176"/>
        <dbReference type="Rhea" id="RHEA-COMP:10000"/>
        <dbReference type="Rhea" id="RHEA-COMP:10001"/>
        <dbReference type="Rhea" id="RHEA-COMP:13337"/>
        <dbReference type="Rhea" id="RHEA-COMP:13338"/>
        <dbReference type="Rhea" id="RHEA-COMP:13339"/>
        <dbReference type="Rhea" id="RHEA-COMP:13340"/>
        <dbReference type="ChEBI" id="CHEBI:15378"/>
        <dbReference type="ChEBI" id="CHEBI:29950"/>
        <dbReference type="ChEBI" id="CHEBI:30616"/>
        <dbReference type="ChEBI" id="CHEBI:33019"/>
        <dbReference type="ChEBI" id="CHEBI:33737"/>
        <dbReference type="ChEBI" id="CHEBI:33738"/>
        <dbReference type="ChEBI" id="CHEBI:61963"/>
        <dbReference type="ChEBI" id="CHEBI:65315"/>
        <dbReference type="ChEBI" id="CHEBI:136798"/>
        <dbReference type="ChEBI" id="CHEBI:456215"/>
        <dbReference type="EC" id="2.8.1.4"/>
    </reaction>
</comment>
<comment type="catalytic activity">
    <reaction evidence="1">
        <text>[ThiS sulfur-carrier protein]-C-terminal Gly-Gly-AMP + S-sulfanyl-L-cysteinyl-[cysteine desulfurase] + AH2 = [ThiS sulfur-carrier protein]-C-terminal-Gly-aminoethanethioate + L-cysteinyl-[cysteine desulfurase] + A + AMP + 2 H(+)</text>
        <dbReference type="Rhea" id="RHEA:43340"/>
        <dbReference type="Rhea" id="RHEA-COMP:12157"/>
        <dbReference type="Rhea" id="RHEA-COMP:12158"/>
        <dbReference type="Rhea" id="RHEA-COMP:12910"/>
        <dbReference type="Rhea" id="RHEA-COMP:19908"/>
        <dbReference type="ChEBI" id="CHEBI:13193"/>
        <dbReference type="ChEBI" id="CHEBI:15378"/>
        <dbReference type="ChEBI" id="CHEBI:17499"/>
        <dbReference type="ChEBI" id="CHEBI:29950"/>
        <dbReference type="ChEBI" id="CHEBI:61963"/>
        <dbReference type="ChEBI" id="CHEBI:90618"/>
        <dbReference type="ChEBI" id="CHEBI:232372"/>
        <dbReference type="ChEBI" id="CHEBI:456215"/>
    </reaction>
</comment>
<comment type="pathway">
    <text evidence="1">Cofactor biosynthesis; thiamine diphosphate biosynthesis.</text>
</comment>
<comment type="subcellular location">
    <subcellularLocation>
        <location evidence="1">Cytoplasm</location>
    </subcellularLocation>
</comment>
<comment type="similarity">
    <text evidence="1">Belongs to the ThiI family.</text>
</comment>
<reference key="1">
    <citation type="journal article" date="2004" name="Proc. Natl. Acad. Sci. U.S.A.">
        <title>Complete genomes of two clinical Staphylococcus aureus strains: evidence for the rapid evolution of virulence and drug resistance.</title>
        <authorList>
            <person name="Holden M.T.G."/>
            <person name="Feil E.J."/>
            <person name="Lindsay J.A."/>
            <person name="Peacock S.J."/>
            <person name="Day N.P.J."/>
            <person name="Enright M.C."/>
            <person name="Foster T.J."/>
            <person name="Moore C.E."/>
            <person name="Hurst L."/>
            <person name="Atkin R."/>
            <person name="Barron A."/>
            <person name="Bason N."/>
            <person name="Bentley S.D."/>
            <person name="Chillingworth C."/>
            <person name="Chillingworth T."/>
            <person name="Churcher C."/>
            <person name="Clark L."/>
            <person name="Corton C."/>
            <person name="Cronin A."/>
            <person name="Doggett J."/>
            <person name="Dowd L."/>
            <person name="Feltwell T."/>
            <person name="Hance Z."/>
            <person name="Harris B."/>
            <person name="Hauser H."/>
            <person name="Holroyd S."/>
            <person name="Jagels K."/>
            <person name="James K.D."/>
            <person name="Lennard N."/>
            <person name="Line A."/>
            <person name="Mayes R."/>
            <person name="Moule S."/>
            <person name="Mungall K."/>
            <person name="Ormond D."/>
            <person name="Quail M.A."/>
            <person name="Rabbinowitsch E."/>
            <person name="Rutherford K.M."/>
            <person name="Sanders M."/>
            <person name="Sharp S."/>
            <person name="Simmonds M."/>
            <person name="Stevens K."/>
            <person name="Whitehead S."/>
            <person name="Barrell B.G."/>
            <person name="Spratt B.G."/>
            <person name="Parkhill J."/>
        </authorList>
    </citation>
    <scope>NUCLEOTIDE SEQUENCE [LARGE SCALE GENOMIC DNA]</scope>
    <source>
        <strain>MRSA252</strain>
    </source>
</reference>
<gene>
    <name evidence="1" type="primary">thiI</name>
    <name type="ordered locus">SAR1793</name>
</gene>
<protein>
    <recommendedName>
        <fullName evidence="1">Probable tRNA sulfurtransferase</fullName>
        <ecNumber evidence="1">2.8.1.4</ecNumber>
    </recommendedName>
    <alternativeName>
        <fullName evidence="1">Sulfur carrier protein ThiS sulfurtransferase</fullName>
    </alternativeName>
    <alternativeName>
        <fullName evidence="1">Thiamine biosynthesis protein ThiI</fullName>
    </alternativeName>
    <alternativeName>
        <fullName evidence="1">tRNA 4-thiouridine synthase</fullName>
    </alternativeName>
</protein>
<dbReference type="EC" id="2.8.1.4" evidence="1"/>
<dbReference type="EMBL" id="BX571856">
    <property type="protein sequence ID" value="CAG40784.1"/>
    <property type="molecule type" value="Genomic_DNA"/>
</dbReference>
<dbReference type="RefSeq" id="WP_000872647.1">
    <property type="nucleotide sequence ID" value="NC_002952.2"/>
</dbReference>
<dbReference type="SMR" id="Q6GFZ2"/>
<dbReference type="KEGG" id="sar:SAR1793"/>
<dbReference type="HOGENOM" id="CLU_037952_4_0_9"/>
<dbReference type="UniPathway" id="UPA00060"/>
<dbReference type="Proteomes" id="UP000000596">
    <property type="component" value="Chromosome"/>
</dbReference>
<dbReference type="GO" id="GO:0005829">
    <property type="term" value="C:cytosol"/>
    <property type="evidence" value="ECO:0007669"/>
    <property type="project" value="TreeGrafter"/>
</dbReference>
<dbReference type="GO" id="GO:0005524">
    <property type="term" value="F:ATP binding"/>
    <property type="evidence" value="ECO:0007669"/>
    <property type="project" value="UniProtKB-UniRule"/>
</dbReference>
<dbReference type="GO" id="GO:0004810">
    <property type="term" value="F:CCA tRNA nucleotidyltransferase activity"/>
    <property type="evidence" value="ECO:0007669"/>
    <property type="project" value="InterPro"/>
</dbReference>
<dbReference type="GO" id="GO:0000049">
    <property type="term" value="F:tRNA binding"/>
    <property type="evidence" value="ECO:0007669"/>
    <property type="project" value="UniProtKB-UniRule"/>
</dbReference>
<dbReference type="GO" id="GO:0140741">
    <property type="term" value="F:tRNA-uracil-4 sulfurtransferase activity"/>
    <property type="evidence" value="ECO:0007669"/>
    <property type="project" value="UniProtKB-EC"/>
</dbReference>
<dbReference type="GO" id="GO:0009228">
    <property type="term" value="P:thiamine biosynthetic process"/>
    <property type="evidence" value="ECO:0007669"/>
    <property type="project" value="UniProtKB-KW"/>
</dbReference>
<dbReference type="GO" id="GO:0009229">
    <property type="term" value="P:thiamine diphosphate biosynthetic process"/>
    <property type="evidence" value="ECO:0007669"/>
    <property type="project" value="UniProtKB-UniRule"/>
</dbReference>
<dbReference type="GO" id="GO:0052837">
    <property type="term" value="P:thiazole biosynthetic process"/>
    <property type="evidence" value="ECO:0007669"/>
    <property type="project" value="TreeGrafter"/>
</dbReference>
<dbReference type="GO" id="GO:0002937">
    <property type="term" value="P:tRNA 4-thiouridine biosynthesis"/>
    <property type="evidence" value="ECO:0007669"/>
    <property type="project" value="TreeGrafter"/>
</dbReference>
<dbReference type="CDD" id="cd01712">
    <property type="entry name" value="PPase_ThiI"/>
    <property type="match status" value="1"/>
</dbReference>
<dbReference type="CDD" id="cd11716">
    <property type="entry name" value="THUMP_ThiI"/>
    <property type="match status" value="1"/>
</dbReference>
<dbReference type="FunFam" id="3.40.50.620:FF:000053">
    <property type="entry name" value="Probable tRNA sulfurtransferase"/>
    <property type="match status" value="1"/>
</dbReference>
<dbReference type="Gene3D" id="3.30.2130.30">
    <property type="match status" value="1"/>
</dbReference>
<dbReference type="Gene3D" id="3.40.50.620">
    <property type="entry name" value="HUPs"/>
    <property type="match status" value="1"/>
</dbReference>
<dbReference type="HAMAP" id="MF_00021">
    <property type="entry name" value="ThiI"/>
    <property type="match status" value="1"/>
</dbReference>
<dbReference type="InterPro" id="IPR014729">
    <property type="entry name" value="Rossmann-like_a/b/a_fold"/>
</dbReference>
<dbReference type="InterPro" id="IPR020536">
    <property type="entry name" value="ThiI_AANH"/>
</dbReference>
<dbReference type="InterPro" id="IPR054173">
    <property type="entry name" value="ThiI_fer"/>
</dbReference>
<dbReference type="InterPro" id="IPR049961">
    <property type="entry name" value="ThiI_N"/>
</dbReference>
<dbReference type="InterPro" id="IPR004114">
    <property type="entry name" value="THUMP_dom"/>
</dbReference>
<dbReference type="InterPro" id="IPR049962">
    <property type="entry name" value="THUMP_ThiI"/>
</dbReference>
<dbReference type="InterPro" id="IPR003720">
    <property type="entry name" value="tRNA_STrfase"/>
</dbReference>
<dbReference type="InterPro" id="IPR050102">
    <property type="entry name" value="tRNA_sulfurtransferase_ThiI"/>
</dbReference>
<dbReference type="NCBIfam" id="TIGR00342">
    <property type="entry name" value="tRNA uracil 4-sulfurtransferase ThiI"/>
    <property type="match status" value="1"/>
</dbReference>
<dbReference type="PANTHER" id="PTHR43209">
    <property type="entry name" value="TRNA SULFURTRANSFERASE"/>
    <property type="match status" value="1"/>
</dbReference>
<dbReference type="PANTHER" id="PTHR43209:SF1">
    <property type="entry name" value="TRNA SULFURTRANSFERASE"/>
    <property type="match status" value="1"/>
</dbReference>
<dbReference type="Pfam" id="PF02568">
    <property type="entry name" value="ThiI"/>
    <property type="match status" value="1"/>
</dbReference>
<dbReference type="Pfam" id="PF22025">
    <property type="entry name" value="ThiI_fer"/>
    <property type="match status" value="1"/>
</dbReference>
<dbReference type="Pfam" id="PF02926">
    <property type="entry name" value="THUMP"/>
    <property type="match status" value="1"/>
</dbReference>
<dbReference type="SMART" id="SM00981">
    <property type="entry name" value="THUMP"/>
    <property type="match status" value="1"/>
</dbReference>
<dbReference type="SUPFAM" id="SSF52402">
    <property type="entry name" value="Adenine nucleotide alpha hydrolases-like"/>
    <property type="match status" value="1"/>
</dbReference>
<dbReference type="SUPFAM" id="SSF143437">
    <property type="entry name" value="THUMP domain-like"/>
    <property type="match status" value="1"/>
</dbReference>
<dbReference type="PROSITE" id="PS51165">
    <property type="entry name" value="THUMP"/>
    <property type="match status" value="1"/>
</dbReference>
<proteinExistence type="inferred from homology"/>
<accession>Q6GFZ2</accession>
<evidence type="ECO:0000255" key="1">
    <source>
        <dbReference type="HAMAP-Rule" id="MF_00021"/>
    </source>
</evidence>